<reference key="1">
    <citation type="journal article" date="1998" name="Nature">
        <title>The genome sequence of Rickettsia prowazekii and the origin of mitochondria.</title>
        <authorList>
            <person name="Andersson S.G.E."/>
            <person name="Zomorodipour A."/>
            <person name="Andersson J.O."/>
            <person name="Sicheritz-Ponten T."/>
            <person name="Alsmark U.C.M."/>
            <person name="Podowski R.M."/>
            <person name="Naeslund A.K."/>
            <person name="Eriksson A.-S."/>
            <person name="Winkler H.H."/>
            <person name="Kurland C.G."/>
        </authorList>
    </citation>
    <scope>NUCLEOTIDE SEQUENCE [LARGE SCALE GENOMIC DNA]</scope>
    <source>
        <strain>Madrid E</strain>
    </source>
</reference>
<dbReference type="EMBL" id="AJ235272">
    <property type="protein sequence ID" value="CAA15114.1"/>
    <property type="molecule type" value="Genomic_DNA"/>
</dbReference>
<dbReference type="PIR" id="H71673">
    <property type="entry name" value="H71673"/>
</dbReference>
<dbReference type="RefSeq" id="NP_221038.1">
    <property type="nucleotide sequence ID" value="NC_000963.1"/>
</dbReference>
<dbReference type="RefSeq" id="WP_004599524.1">
    <property type="nucleotide sequence ID" value="NC_000963.1"/>
</dbReference>
<dbReference type="SMR" id="Q9ZCP6"/>
<dbReference type="STRING" id="272947.gene:17555754"/>
<dbReference type="EnsemblBacteria" id="CAA15114">
    <property type="protein sequence ID" value="CAA15114"/>
    <property type="gene ID" value="CAA15114"/>
</dbReference>
<dbReference type="GeneID" id="57569803"/>
<dbReference type="KEGG" id="rpr:RP677"/>
<dbReference type="PATRIC" id="fig|272947.5.peg.699"/>
<dbReference type="eggNOG" id="COG1160">
    <property type="taxonomic scope" value="Bacteria"/>
</dbReference>
<dbReference type="HOGENOM" id="CLU_016077_5_0_5"/>
<dbReference type="OrthoDB" id="9805918at2"/>
<dbReference type="Proteomes" id="UP000002480">
    <property type="component" value="Chromosome"/>
</dbReference>
<dbReference type="GO" id="GO:0005525">
    <property type="term" value="F:GTP binding"/>
    <property type="evidence" value="ECO:0007669"/>
    <property type="project" value="UniProtKB-UniRule"/>
</dbReference>
<dbReference type="GO" id="GO:0042254">
    <property type="term" value="P:ribosome biogenesis"/>
    <property type="evidence" value="ECO:0007669"/>
    <property type="project" value="UniProtKB-KW"/>
</dbReference>
<dbReference type="CDD" id="cd01894">
    <property type="entry name" value="EngA1"/>
    <property type="match status" value="1"/>
</dbReference>
<dbReference type="CDD" id="cd01895">
    <property type="entry name" value="EngA2"/>
    <property type="match status" value="1"/>
</dbReference>
<dbReference type="FunFam" id="3.30.300.20:FF:000004">
    <property type="entry name" value="GTPase Der"/>
    <property type="match status" value="1"/>
</dbReference>
<dbReference type="Gene3D" id="3.30.300.20">
    <property type="match status" value="1"/>
</dbReference>
<dbReference type="Gene3D" id="3.40.50.300">
    <property type="entry name" value="P-loop containing nucleotide triphosphate hydrolases"/>
    <property type="match status" value="2"/>
</dbReference>
<dbReference type="HAMAP" id="MF_00195">
    <property type="entry name" value="GTPase_Der"/>
    <property type="match status" value="1"/>
</dbReference>
<dbReference type="InterPro" id="IPR031166">
    <property type="entry name" value="G_ENGA"/>
</dbReference>
<dbReference type="InterPro" id="IPR006073">
    <property type="entry name" value="GTP-bd"/>
</dbReference>
<dbReference type="InterPro" id="IPR016484">
    <property type="entry name" value="GTPase_Der"/>
</dbReference>
<dbReference type="InterPro" id="IPR032859">
    <property type="entry name" value="KH_dom-like"/>
</dbReference>
<dbReference type="InterPro" id="IPR015946">
    <property type="entry name" value="KH_dom-like_a/b"/>
</dbReference>
<dbReference type="InterPro" id="IPR027417">
    <property type="entry name" value="P-loop_NTPase"/>
</dbReference>
<dbReference type="InterPro" id="IPR005225">
    <property type="entry name" value="Small_GTP-bd"/>
</dbReference>
<dbReference type="NCBIfam" id="TIGR03594">
    <property type="entry name" value="GTPase_EngA"/>
    <property type="match status" value="1"/>
</dbReference>
<dbReference type="NCBIfam" id="TIGR00231">
    <property type="entry name" value="small_GTP"/>
    <property type="match status" value="2"/>
</dbReference>
<dbReference type="PANTHER" id="PTHR43834">
    <property type="entry name" value="GTPASE DER"/>
    <property type="match status" value="1"/>
</dbReference>
<dbReference type="PANTHER" id="PTHR43834:SF6">
    <property type="entry name" value="GTPASE DER"/>
    <property type="match status" value="1"/>
</dbReference>
<dbReference type="Pfam" id="PF14714">
    <property type="entry name" value="KH_dom-like"/>
    <property type="match status" value="1"/>
</dbReference>
<dbReference type="Pfam" id="PF01926">
    <property type="entry name" value="MMR_HSR1"/>
    <property type="match status" value="2"/>
</dbReference>
<dbReference type="PIRSF" id="PIRSF006485">
    <property type="entry name" value="GTP-binding_EngA"/>
    <property type="match status" value="1"/>
</dbReference>
<dbReference type="PRINTS" id="PR00326">
    <property type="entry name" value="GTP1OBG"/>
</dbReference>
<dbReference type="SUPFAM" id="SSF52540">
    <property type="entry name" value="P-loop containing nucleoside triphosphate hydrolases"/>
    <property type="match status" value="2"/>
</dbReference>
<dbReference type="PROSITE" id="PS51712">
    <property type="entry name" value="G_ENGA"/>
    <property type="match status" value="2"/>
</dbReference>
<feature type="chain" id="PRO_0000179038" description="GTPase Der">
    <location>
        <begin position="1"/>
        <end position="447"/>
    </location>
</feature>
<feature type="domain" description="EngA-type G 1">
    <location>
        <begin position="4"/>
        <end position="165"/>
    </location>
</feature>
<feature type="domain" description="EngA-type G 2">
    <location>
        <begin position="180"/>
        <end position="357"/>
    </location>
</feature>
<feature type="domain" description="KH-like" evidence="1">
    <location>
        <begin position="358"/>
        <end position="443"/>
    </location>
</feature>
<feature type="binding site" evidence="1">
    <location>
        <begin position="10"/>
        <end position="17"/>
    </location>
    <ligand>
        <name>GTP</name>
        <dbReference type="ChEBI" id="CHEBI:37565"/>
        <label>1</label>
    </ligand>
</feature>
<feature type="binding site" evidence="1">
    <location>
        <begin position="57"/>
        <end position="61"/>
    </location>
    <ligand>
        <name>GTP</name>
        <dbReference type="ChEBI" id="CHEBI:37565"/>
        <label>1</label>
    </ligand>
</feature>
<feature type="binding site" evidence="1">
    <location>
        <begin position="119"/>
        <end position="122"/>
    </location>
    <ligand>
        <name>GTP</name>
        <dbReference type="ChEBI" id="CHEBI:37565"/>
        <label>1</label>
    </ligand>
</feature>
<feature type="binding site" evidence="1">
    <location>
        <begin position="186"/>
        <end position="193"/>
    </location>
    <ligand>
        <name>GTP</name>
        <dbReference type="ChEBI" id="CHEBI:37565"/>
        <label>2</label>
    </ligand>
</feature>
<feature type="binding site" evidence="1">
    <location>
        <begin position="233"/>
        <end position="237"/>
    </location>
    <ligand>
        <name>GTP</name>
        <dbReference type="ChEBI" id="CHEBI:37565"/>
        <label>2</label>
    </ligand>
</feature>
<feature type="binding site" evidence="1">
    <location>
        <begin position="298"/>
        <end position="301"/>
    </location>
    <ligand>
        <name>GTP</name>
        <dbReference type="ChEBI" id="CHEBI:37565"/>
        <label>2</label>
    </ligand>
</feature>
<accession>Q9ZCP6</accession>
<sequence length="447" mass="50949">MTKKIITLVGRPNVGKSTLFNRLSIRKKAIVHDLPGVTRDRKYTDGKIGSFEFLLIDTPGLEENPDNMGERLMGQTTQAILEADLICFMVDGKSGVLPDDKLLSNFVRKYNKHCILVVNKCEKAFDFDKEYYKLGFDSIVIISAEHGIGLIDLYDAIISKLSVEESIERNIADPFRGDCLQIVVSGRPNAGKSTFINAIINDERLLTGPEAGITRESIEVDWQYKNTHIKLIDTAGLRKKSTITASLEKLSTSDTINSIKFANTVILMIDALAHVKQQDFNIASHIVNEGRSIIIVVNKWDLVKESEKEAFQKEFYYQINTHLPQIKGVPVLFISAINKQNIEQVLDACLKIYKIWNKKITTNKLNKWLDFTTKIHPLPLQKCGRRVRIKYMTQIKTRPPTFKLFSNNPGKITDSYTRYLVNNMRDAFDMHGIPIRFTYVKNKNPYV</sequence>
<keyword id="KW-0342">GTP-binding</keyword>
<keyword id="KW-0547">Nucleotide-binding</keyword>
<keyword id="KW-1185">Reference proteome</keyword>
<keyword id="KW-0677">Repeat</keyword>
<keyword id="KW-0690">Ribosome biogenesis</keyword>
<proteinExistence type="inferred from homology"/>
<evidence type="ECO:0000255" key="1">
    <source>
        <dbReference type="HAMAP-Rule" id="MF_00195"/>
    </source>
</evidence>
<gene>
    <name evidence="1" type="primary">der</name>
    <name type="synonym">engA</name>
    <name type="ordered locus">RP677</name>
</gene>
<name>DER_RICPR</name>
<organism>
    <name type="scientific">Rickettsia prowazekii (strain Madrid E)</name>
    <dbReference type="NCBI Taxonomy" id="272947"/>
    <lineage>
        <taxon>Bacteria</taxon>
        <taxon>Pseudomonadati</taxon>
        <taxon>Pseudomonadota</taxon>
        <taxon>Alphaproteobacteria</taxon>
        <taxon>Rickettsiales</taxon>
        <taxon>Rickettsiaceae</taxon>
        <taxon>Rickettsieae</taxon>
        <taxon>Rickettsia</taxon>
        <taxon>typhus group</taxon>
    </lineage>
</organism>
<comment type="function">
    <text evidence="1">GTPase that plays an essential role in the late steps of ribosome biogenesis.</text>
</comment>
<comment type="subunit">
    <text evidence="1">Associates with the 50S ribosomal subunit.</text>
</comment>
<comment type="similarity">
    <text evidence="1">Belongs to the TRAFAC class TrmE-Era-EngA-EngB-Septin-like GTPase superfamily. EngA (Der) GTPase family.</text>
</comment>
<protein>
    <recommendedName>
        <fullName evidence="1">GTPase Der</fullName>
    </recommendedName>
    <alternativeName>
        <fullName evidence="1">GTP-binding protein EngA</fullName>
    </alternativeName>
</protein>